<gene>
    <name type="ordered locus">At1g01540</name>
    <name type="ORF">F22L4.8</name>
</gene>
<feature type="chain" id="PRO_0000302048" description="Probable serine/threonine-protein kinase At1g01540">
    <location>
        <begin position="1"/>
        <end position="472"/>
    </location>
</feature>
<feature type="transmembrane region" description="Helical" evidence="2">
    <location>
        <begin position="24"/>
        <end position="44"/>
    </location>
</feature>
<feature type="domain" description="Protein kinase" evidence="3">
    <location>
        <begin position="154"/>
        <end position="431"/>
    </location>
</feature>
<feature type="region of interest" description="Disordered" evidence="5">
    <location>
        <begin position="437"/>
        <end position="472"/>
    </location>
</feature>
<feature type="compositionally biased region" description="Basic and acidic residues" evidence="5">
    <location>
        <begin position="437"/>
        <end position="449"/>
    </location>
</feature>
<feature type="compositionally biased region" description="Low complexity" evidence="5">
    <location>
        <begin position="451"/>
        <end position="462"/>
    </location>
</feature>
<feature type="active site" description="Proton acceptor" evidence="3 4">
    <location>
        <position position="280"/>
    </location>
</feature>
<feature type="binding site" evidence="3">
    <location>
        <begin position="160"/>
        <end position="168"/>
    </location>
    <ligand>
        <name>ATP</name>
        <dbReference type="ChEBI" id="CHEBI:30616"/>
    </ligand>
</feature>
<feature type="binding site" evidence="3">
    <location>
        <position position="182"/>
    </location>
    <ligand>
        <name>ATP</name>
        <dbReference type="ChEBI" id="CHEBI:30616"/>
    </ligand>
</feature>
<feature type="modified residue" description="Phosphothreonine" evidence="7">
    <location>
        <position position="67"/>
    </location>
</feature>
<feature type="modified residue" description="Phosphothreonine" evidence="1">
    <location>
        <position position="143"/>
    </location>
</feature>
<feature type="modified residue" description="Phosphotyrosine" evidence="1">
    <location>
        <position position="227"/>
    </location>
</feature>
<feature type="modified residue" description="Phosphoserine" evidence="1">
    <location>
        <position position="284"/>
    </location>
</feature>
<feature type="modified residue" description="Phosphothreonine" evidence="1">
    <location>
        <position position="314"/>
    </location>
</feature>
<feature type="modified residue" description="Phosphothreonine" evidence="1">
    <location>
        <position position="319"/>
    </location>
</feature>
<feature type="modified residue" description="Phosphotyrosine" evidence="1">
    <location>
        <position position="327"/>
    </location>
</feature>
<evidence type="ECO:0000250" key="1">
    <source>
        <dbReference type="UniProtKB" id="O48814"/>
    </source>
</evidence>
<evidence type="ECO:0000255" key="2"/>
<evidence type="ECO:0000255" key="3">
    <source>
        <dbReference type="PROSITE-ProRule" id="PRU00159"/>
    </source>
</evidence>
<evidence type="ECO:0000255" key="4">
    <source>
        <dbReference type="PROSITE-ProRule" id="PRU10027"/>
    </source>
</evidence>
<evidence type="ECO:0000256" key="5">
    <source>
        <dbReference type="SAM" id="MobiDB-lite"/>
    </source>
</evidence>
<evidence type="ECO:0000305" key="6"/>
<evidence type="ECO:0007744" key="7">
    <source>
    </source>
</evidence>
<reference key="1">
    <citation type="journal article" date="1998" name="Gene">
        <title>Sequence analysis of a 40-kb Arabidopsis thaliana genomic region located at the top of chromosome 1.</title>
        <authorList>
            <person name="Terryn N."/>
            <person name="Gielen J."/>
            <person name="De Keyser A."/>
            <person name="Van Den Daele H."/>
            <person name="Ardiles W."/>
            <person name="Neyt P."/>
            <person name="De Clercq R."/>
            <person name="Coppieters J."/>
            <person name="Dehais P."/>
            <person name="Villarroel R."/>
            <person name="Rouze P."/>
            <person name="van Montagu M."/>
        </authorList>
    </citation>
    <scope>NUCLEOTIDE SEQUENCE [LARGE SCALE GENOMIC DNA]</scope>
</reference>
<reference key="2">
    <citation type="journal article" date="2000" name="Nature">
        <title>Sequence and analysis of chromosome 1 of the plant Arabidopsis thaliana.</title>
        <authorList>
            <person name="Theologis A."/>
            <person name="Ecker J.R."/>
            <person name="Palm C.J."/>
            <person name="Federspiel N.A."/>
            <person name="Kaul S."/>
            <person name="White O."/>
            <person name="Alonso J."/>
            <person name="Altafi H."/>
            <person name="Araujo R."/>
            <person name="Bowman C.L."/>
            <person name="Brooks S.Y."/>
            <person name="Buehler E."/>
            <person name="Chan A."/>
            <person name="Chao Q."/>
            <person name="Chen H."/>
            <person name="Cheuk R.F."/>
            <person name="Chin C.W."/>
            <person name="Chung M.K."/>
            <person name="Conn L."/>
            <person name="Conway A.B."/>
            <person name="Conway A.R."/>
            <person name="Creasy T.H."/>
            <person name="Dewar K."/>
            <person name="Dunn P."/>
            <person name="Etgu P."/>
            <person name="Feldblyum T.V."/>
            <person name="Feng J.-D."/>
            <person name="Fong B."/>
            <person name="Fujii C.Y."/>
            <person name="Gill J.E."/>
            <person name="Goldsmith A.D."/>
            <person name="Haas B."/>
            <person name="Hansen N.F."/>
            <person name="Hughes B."/>
            <person name="Huizar L."/>
            <person name="Hunter J.L."/>
            <person name="Jenkins J."/>
            <person name="Johnson-Hopson C."/>
            <person name="Khan S."/>
            <person name="Khaykin E."/>
            <person name="Kim C.J."/>
            <person name="Koo H.L."/>
            <person name="Kremenetskaia I."/>
            <person name="Kurtz D.B."/>
            <person name="Kwan A."/>
            <person name="Lam B."/>
            <person name="Langin-Hooper S."/>
            <person name="Lee A."/>
            <person name="Lee J.M."/>
            <person name="Lenz C.A."/>
            <person name="Li J.H."/>
            <person name="Li Y.-P."/>
            <person name="Lin X."/>
            <person name="Liu S.X."/>
            <person name="Liu Z.A."/>
            <person name="Luros J.S."/>
            <person name="Maiti R."/>
            <person name="Marziali A."/>
            <person name="Militscher J."/>
            <person name="Miranda M."/>
            <person name="Nguyen M."/>
            <person name="Nierman W.C."/>
            <person name="Osborne B.I."/>
            <person name="Pai G."/>
            <person name="Peterson J."/>
            <person name="Pham P.K."/>
            <person name="Rizzo M."/>
            <person name="Rooney T."/>
            <person name="Rowley D."/>
            <person name="Sakano H."/>
            <person name="Salzberg S.L."/>
            <person name="Schwartz J.R."/>
            <person name="Shinn P."/>
            <person name="Southwick A.M."/>
            <person name="Sun H."/>
            <person name="Tallon L.J."/>
            <person name="Tambunga G."/>
            <person name="Toriumi M.J."/>
            <person name="Town C.D."/>
            <person name="Utterback T."/>
            <person name="Van Aken S."/>
            <person name="Vaysberg M."/>
            <person name="Vysotskaia V.S."/>
            <person name="Walker M."/>
            <person name="Wu D."/>
            <person name="Yu G."/>
            <person name="Fraser C.M."/>
            <person name="Venter J.C."/>
            <person name="Davis R.W."/>
        </authorList>
    </citation>
    <scope>NUCLEOTIDE SEQUENCE [LARGE SCALE GENOMIC DNA]</scope>
    <source>
        <strain>cv. Columbia</strain>
    </source>
</reference>
<reference key="3">
    <citation type="journal article" date="2017" name="Plant J.">
        <title>Araport11: a complete reannotation of the Arabidopsis thaliana reference genome.</title>
        <authorList>
            <person name="Cheng C.Y."/>
            <person name="Krishnakumar V."/>
            <person name="Chan A.P."/>
            <person name="Thibaud-Nissen F."/>
            <person name="Schobel S."/>
            <person name="Town C.D."/>
        </authorList>
    </citation>
    <scope>GENOME REANNOTATION</scope>
    <source>
        <strain>cv. Columbia</strain>
    </source>
</reference>
<reference key="4">
    <citation type="journal article" date="2003" name="Science">
        <title>Empirical analysis of transcriptional activity in the Arabidopsis genome.</title>
        <authorList>
            <person name="Yamada K."/>
            <person name="Lim J."/>
            <person name="Dale J.M."/>
            <person name="Chen H."/>
            <person name="Shinn P."/>
            <person name="Palm C.J."/>
            <person name="Southwick A.M."/>
            <person name="Wu H.C."/>
            <person name="Kim C.J."/>
            <person name="Nguyen M."/>
            <person name="Pham P.K."/>
            <person name="Cheuk R.F."/>
            <person name="Karlin-Newmann G."/>
            <person name="Liu S.X."/>
            <person name="Lam B."/>
            <person name="Sakano H."/>
            <person name="Wu T."/>
            <person name="Yu G."/>
            <person name="Miranda M."/>
            <person name="Quach H.L."/>
            <person name="Tripp M."/>
            <person name="Chang C.H."/>
            <person name="Lee J.M."/>
            <person name="Toriumi M.J."/>
            <person name="Chan M.M."/>
            <person name="Tang C.C."/>
            <person name="Onodera C.S."/>
            <person name="Deng J.M."/>
            <person name="Akiyama K."/>
            <person name="Ansari Y."/>
            <person name="Arakawa T."/>
            <person name="Banh J."/>
            <person name="Banno F."/>
            <person name="Bowser L."/>
            <person name="Brooks S.Y."/>
            <person name="Carninci P."/>
            <person name="Chao Q."/>
            <person name="Choy N."/>
            <person name="Enju A."/>
            <person name="Goldsmith A.D."/>
            <person name="Gurjal M."/>
            <person name="Hansen N.F."/>
            <person name="Hayashizaki Y."/>
            <person name="Johnson-Hopson C."/>
            <person name="Hsuan V.W."/>
            <person name="Iida K."/>
            <person name="Karnes M."/>
            <person name="Khan S."/>
            <person name="Koesema E."/>
            <person name="Ishida J."/>
            <person name="Jiang P.X."/>
            <person name="Jones T."/>
            <person name="Kawai J."/>
            <person name="Kamiya A."/>
            <person name="Meyers C."/>
            <person name="Nakajima M."/>
            <person name="Narusaka M."/>
            <person name="Seki M."/>
            <person name="Sakurai T."/>
            <person name="Satou M."/>
            <person name="Tamse R."/>
            <person name="Vaysberg M."/>
            <person name="Wallender E.K."/>
            <person name="Wong C."/>
            <person name="Yamamura Y."/>
            <person name="Yuan S."/>
            <person name="Shinozaki K."/>
            <person name="Davis R.W."/>
            <person name="Theologis A."/>
            <person name="Ecker J.R."/>
        </authorList>
    </citation>
    <scope>NUCLEOTIDE SEQUENCE [LARGE SCALE MRNA]</scope>
    <source>
        <strain>cv. Columbia</strain>
    </source>
</reference>
<reference key="5">
    <citation type="journal article" date="2009" name="Plant Physiol.">
        <title>Large-scale Arabidopsis phosphoproteome profiling reveals novel chloroplast kinase substrates and phosphorylation networks.</title>
        <authorList>
            <person name="Reiland S."/>
            <person name="Messerli G."/>
            <person name="Baerenfaller K."/>
            <person name="Gerrits B."/>
            <person name="Endler A."/>
            <person name="Grossmann J."/>
            <person name="Gruissem W."/>
            <person name="Baginsky S."/>
        </authorList>
    </citation>
    <scope>PHOSPHORYLATION [LARGE SCALE ANALYSIS] AT THR-67</scope>
    <scope>IDENTIFICATION BY MASS SPECTROMETRY [LARGE SCALE ANALYSIS]</scope>
</reference>
<accession>Q3EDL4</accession>
<accession>O23699</accession>
<accession>Q94KD9</accession>
<accession>Q9LMM7</accession>
<name>Y1154_ARATH</name>
<organism>
    <name type="scientific">Arabidopsis thaliana</name>
    <name type="common">Mouse-ear cress</name>
    <dbReference type="NCBI Taxonomy" id="3702"/>
    <lineage>
        <taxon>Eukaryota</taxon>
        <taxon>Viridiplantae</taxon>
        <taxon>Streptophyta</taxon>
        <taxon>Embryophyta</taxon>
        <taxon>Tracheophyta</taxon>
        <taxon>Spermatophyta</taxon>
        <taxon>Magnoliopsida</taxon>
        <taxon>eudicotyledons</taxon>
        <taxon>Gunneridae</taxon>
        <taxon>Pentapetalae</taxon>
        <taxon>rosids</taxon>
        <taxon>malvids</taxon>
        <taxon>Brassicales</taxon>
        <taxon>Brassicaceae</taxon>
        <taxon>Camelineae</taxon>
        <taxon>Arabidopsis</taxon>
    </lineage>
</organism>
<dbReference type="EC" id="2.7.11.1"/>
<dbReference type="EMBL" id="Y12776">
    <property type="protein sequence ID" value="CAA73303.1"/>
    <property type="molecule type" value="Genomic_DNA"/>
</dbReference>
<dbReference type="EMBL" id="AC061957">
    <property type="protein sequence ID" value="AAF81312.1"/>
    <property type="molecule type" value="Genomic_DNA"/>
</dbReference>
<dbReference type="EMBL" id="CP002684">
    <property type="protein sequence ID" value="AEE27302.1"/>
    <property type="molecule type" value="Genomic_DNA"/>
</dbReference>
<dbReference type="EMBL" id="AF332429">
    <property type="protein sequence ID" value="AAG48792.1"/>
    <property type="molecule type" value="mRNA"/>
</dbReference>
<dbReference type="EMBL" id="AF367265">
    <property type="protein sequence ID" value="AAK56254.1"/>
    <property type="status" value="ALT_SEQ"/>
    <property type="molecule type" value="mRNA"/>
</dbReference>
<dbReference type="EMBL" id="AY093964">
    <property type="protein sequence ID" value="AAM16225.1"/>
    <property type="status" value="ALT_SEQ"/>
    <property type="molecule type" value="mRNA"/>
</dbReference>
<dbReference type="PIR" id="A86146">
    <property type="entry name" value="A86146"/>
</dbReference>
<dbReference type="RefSeq" id="NP_171661.1">
    <molecule id="Q3EDL4-1"/>
    <property type="nucleotide sequence ID" value="NM_100036.5"/>
</dbReference>
<dbReference type="SMR" id="Q3EDL4"/>
<dbReference type="BioGRID" id="24768">
    <property type="interactions" value="1"/>
</dbReference>
<dbReference type="FunCoup" id="Q3EDL4">
    <property type="interactions" value="645"/>
</dbReference>
<dbReference type="STRING" id="3702.Q3EDL4"/>
<dbReference type="iPTMnet" id="Q3EDL4"/>
<dbReference type="PaxDb" id="3702-AT1G01540.2"/>
<dbReference type="ProteomicsDB" id="242500">
    <molecule id="Q3EDL4-1"/>
</dbReference>
<dbReference type="EnsemblPlants" id="AT1G01540.2">
    <molecule id="Q3EDL4-1"/>
    <property type="protein sequence ID" value="AT1G01540.2"/>
    <property type="gene ID" value="AT1G01540"/>
</dbReference>
<dbReference type="GeneID" id="839533"/>
<dbReference type="Gramene" id="AT1G01540.2">
    <molecule id="Q3EDL4-1"/>
    <property type="protein sequence ID" value="AT1G01540.2"/>
    <property type="gene ID" value="AT1G01540"/>
</dbReference>
<dbReference type="KEGG" id="ath:AT1G01540"/>
<dbReference type="Araport" id="AT1G01540"/>
<dbReference type="TAIR" id="AT1G01540"/>
<dbReference type="eggNOG" id="KOG1187">
    <property type="taxonomic scope" value="Eukaryota"/>
</dbReference>
<dbReference type="InParanoid" id="Q3EDL4"/>
<dbReference type="OMA" id="IGKMEHR"/>
<dbReference type="PhylomeDB" id="Q3EDL4"/>
<dbReference type="PRO" id="PR:Q3EDL4"/>
<dbReference type="Proteomes" id="UP000006548">
    <property type="component" value="Chromosome 1"/>
</dbReference>
<dbReference type="ExpressionAtlas" id="Q3EDL4">
    <property type="expression patterns" value="baseline and differential"/>
</dbReference>
<dbReference type="GO" id="GO:0005886">
    <property type="term" value="C:plasma membrane"/>
    <property type="evidence" value="ECO:0007005"/>
    <property type="project" value="TAIR"/>
</dbReference>
<dbReference type="GO" id="GO:0005524">
    <property type="term" value="F:ATP binding"/>
    <property type="evidence" value="ECO:0007669"/>
    <property type="project" value="UniProtKB-KW"/>
</dbReference>
<dbReference type="GO" id="GO:0106310">
    <property type="term" value="F:protein serine kinase activity"/>
    <property type="evidence" value="ECO:0007669"/>
    <property type="project" value="RHEA"/>
</dbReference>
<dbReference type="GO" id="GO:0004674">
    <property type="term" value="F:protein serine/threonine kinase activity"/>
    <property type="evidence" value="ECO:0007005"/>
    <property type="project" value="TAIR"/>
</dbReference>
<dbReference type="GO" id="GO:0046777">
    <property type="term" value="P:protein autophosphorylation"/>
    <property type="evidence" value="ECO:0007005"/>
    <property type="project" value="TAIR"/>
</dbReference>
<dbReference type="CDD" id="cd14066">
    <property type="entry name" value="STKc_IRAK"/>
    <property type="match status" value="1"/>
</dbReference>
<dbReference type="FunFam" id="3.30.200.20:FF:000173">
    <property type="entry name" value="Probable serine/threonine-protein kinase At1g01540"/>
    <property type="match status" value="1"/>
</dbReference>
<dbReference type="FunFam" id="1.10.510.10:FF:000035">
    <property type="entry name" value="Putative receptor-like serine/threonine-protein kinase"/>
    <property type="match status" value="1"/>
</dbReference>
<dbReference type="Gene3D" id="3.30.200.20">
    <property type="entry name" value="Phosphorylase Kinase, domain 1"/>
    <property type="match status" value="1"/>
</dbReference>
<dbReference type="Gene3D" id="1.10.510.10">
    <property type="entry name" value="Transferase(Phosphotransferase) domain 1"/>
    <property type="match status" value="1"/>
</dbReference>
<dbReference type="InterPro" id="IPR011009">
    <property type="entry name" value="Kinase-like_dom_sf"/>
</dbReference>
<dbReference type="InterPro" id="IPR000719">
    <property type="entry name" value="Prot_kinase_dom"/>
</dbReference>
<dbReference type="InterPro" id="IPR017441">
    <property type="entry name" value="Protein_kinase_ATP_BS"/>
</dbReference>
<dbReference type="InterPro" id="IPR052232">
    <property type="entry name" value="RLK_Ser/Thr-Kinase"/>
</dbReference>
<dbReference type="InterPro" id="IPR008271">
    <property type="entry name" value="Ser/Thr_kinase_AS"/>
</dbReference>
<dbReference type="PANTHER" id="PTHR47984">
    <property type="entry name" value="OS01G0323000 PROTEIN"/>
    <property type="match status" value="1"/>
</dbReference>
<dbReference type="PANTHER" id="PTHR47984:SF22">
    <property type="entry name" value="OS03G0125600 PROTEIN"/>
    <property type="match status" value="1"/>
</dbReference>
<dbReference type="Pfam" id="PF00069">
    <property type="entry name" value="Pkinase"/>
    <property type="match status" value="1"/>
</dbReference>
<dbReference type="SMART" id="SM00220">
    <property type="entry name" value="S_TKc"/>
    <property type="match status" value="1"/>
</dbReference>
<dbReference type="SUPFAM" id="SSF56112">
    <property type="entry name" value="Protein kinase-like (PK-like)"/>
    <property type="match status" value="1"/>
</dbReference>
<dbReference type="PROSITE" id="PS00107">
    <property type="entry name" value="PROTEIN_KINASE_ATP"/>
    <property type="match status" value="1"/>
</dbReference>
<dbReference type="PROSITE" id="PS50011">
    <property type="entry name" value="PROTEIN_KINASE_DOM"/>
    <property type="match status" value="1"/>
</dbReference>
<dbReference type="PROSITE" id="PS00108">
    <property type="entry name" value="PROTEIN_KINASE_ST"/>
    <property type="match status" value="1"/>
</dbReference>
<keyword id="KW-0025">Alternative splicing</keyword>
<keyword id="KW-0067">ATP-binding</keyword>
<keyword id="KW-0418">Kinase</keyword>
<keyword id="KW-0472">Membrane</keyword>
<keyword id="KW-0547">Nucleotide-binding</keyword>
<keyword id="KW-0597">Phosphoprotein</keyword>
<keyword id="KW-1185">Reference proteome</keyword>
<keyword id="KW-0723">Serine/threonine-protein kinase</keyword>
<keyword id="KW-0808">Transferase</keyword>
<keyword id="KW-0812">Transmembrane</keyword>
<keyword id="KW-1133">Transmembrane helix</keyword>
<protein>
    <recommendedName>
        <fullName>Probable serine/threonine-protein kinase At1g01540</fullName>
        <ecNumber>2.7.11.1</ecNumber>
    </recommendedName>
</protein>
<comment type="catalytic activity">
    <reaction>
        <text>L-seryl-[protein] + ATP = O-phospho-L-seryl-[protein] + ADP + H(+)</text>
        <dbReference type="Rhea" id="RHEA:17989"/>
        <dbReference type="Rhea" id="RHEA-COMP:9863"/>
        <dbReference type="Rhea" id="RHEA-COMP:11604"/>
        <dbReference type="ChEBI" id="CHEBI:15378"/>
        <dbReference type="ChEBI" id="CHEBI:29999"/>
        <dbReference type="ChEBI" id="CHEBI:30616"/>
        <dbReference type="ChEBI" id="CHEBI:83421"/>
        <dbReference type="ChEBI" id="CHEBI:456216"/>
        <dbReference type="EC" id="2.7.11.1"/>
    </reaction>
</comment>
<comment type="catalytic activity">
    <reaction>
        <text>L-threonyl-[protein] + ATP = O-phospho-L-threonyl-[protein] + ADP + H(+)</text>
        <dbReference type="Rhea" id="RHEA:46608"/>
        <dbReference type="Rhea" id="RHEA-COMP:11060"/>
        <dbReference type="Rhea" id="RHEA-COMP:11605"/>
        <dbReference type="ChEBI" id="CHEBI:15378"/>
        <dbReference type="ChEBI" id="CHEBI:30013"/>
        <dbReference type="ChEBI" id="CHEBI:30616"/>
        <dbReference type="ChEBI" id="CHEBI:61977"/>
        <dbReference type="ChEBI" id="CHEBI:456216"/>
        <dbReference type="EC" id="2.7.11.1"/>
    </reaction>
</comment>
<comment type="subcellular location">
    <subcellularLocation>
        <location evidence="6">Membrane</location>
        <topology evidence="6">Single-pass membrane protein</topology>
    </subcellularLocation>
</comment>
<comment type="alternative products">
    <event type="alternative splicing"/>
    <isoform>
        <id>Q3EDL4-1</id>
        <name>1</name>
        <sequence type="displayed"/>
    </isoform>
    <text>A number of isoforms are produced. According to EST sequences.</text>
</comment>
<comment type="similarity">
    <text evidence="3">Belongs to the protein kinase superfamily. Ser/Thr protein kinase family.</text>
</comment>
<comment type="sequence caution" evidence="6">
    <conflict type="erroneous termination">
        <sequence resource="EMBL-CDS" id="AAK56254"/>
    </conflict>
    <text>Extended C-terminus.</text>
</comment>
<comment type="sequence caution" evidence="6">
    <conflict type="erroneous termination">
        <sequence resource="EMBL-CDS" id="AAM16225"/>
    </conflict>
    <text>Extended C-terminus.</text>
</comment>
<proteinExistence type="evidence at protein level"/>
<sequence length="472" mass="52325">MSVYDAAFLNTELSKPTSIFGLRLWVVIGILLGSLIVIALFLLSLCLTSRRKNRKPRADFASAAIATPPISKEIKEIVPAQNQSVPAEIQVDIGKIEHRVVFSDRVSSGESRGTASASETASYSGSGNCGPEVSHLGWGRWYTLRELEAATNGLCEENVIGEGGYGIVYRGILTDGTKVAVKNLLNNRGQAEKEFKVEVEVIGRVRHKNLVRLLGYCVEGAYRMLVYDFVDNGNLEQWIHGDVGDVSPLTWDIRMNIILGMAKGLAYLHEGLEPKVVHRDIKSSNILLDRQWNAKVSDFGLAKLLGSESSYVTTRVMGTFGYVAPEYACTGMLNEKSDIYSFGILIMEIITGRNPVDYSRPQGETNLVDWLKSMVGNRRSEEVVDPKIPEPPSSKALKRVLLVALRCVDPDANKRPKMGHIIHMLEAEDLLYRDERRTTRDHGSRERQETAVVAAGSESGESGSRHHQQKQR</sequence>